<sequence length="1543" mass="172905">MLEINEFNAIRISLASPEDILSWSHGEVTKPETINYRTLRPERDGLFCEKIFGPTRDWECYCGKYKRVRYKGIVCDKCGVEVTRSKVRRDRMGHIKLASPVSHIWFVKGTPSRLGLLLDISPRNLERVLYFASYIITDVDDLALGNVREQMKTDFGVRRKDLEEKIIEQRGEKATRLSKDLAAMDNAMEGTLERTHEQFARQRQEIEDEANALREHLEELIGIDALADEDIVYRGTVLLEENEPVRERSLEQLEQLIDQEREKLEQRREYEIENVRLLADGERDQRQSVADAEQERLTTALIKQLEDLNKEEKDKLDRLDDIQLHRIISENEYRILRDLAPYTFKADMGAGAVRDIVSMVDLDELSNQMQAEVQSSSGQRRKKATKRLRVVEAFRKSGNRPEWMIMTVLPVIPPDLRPMVQLDGGRFATSDLNDLYRRVINRNNRLKRLMELNAPEIIVRNEKRMLQEAVDALIDNGRRGRPVSGKGKHRLKSLSDMLKGKQGRFRQNLLGKRVDYSGRSVIVVGPTLQLHQCGLPKKMALELFKPFVMRRLVDKGFAHNIKSAKRFVERVRPEVWDVLEEVIKDYLVLLNRAPSLHRLSIQAFEAKLIEGSAIQLHPLVCAAFNADFDGDQMAVHVPLSRKAQEEARRRMISTYNLLSPATGDPIITPSQDIVLGCFYLTQVRPGAKGGGKRFGSIDEALLAYTNGVVHIQAPVWIVIEDYILPGSDLREKELPSLDGVTPRVLIETSVGRIIFNNALRYQGEPKAGENGYRSPLHYRNFLVGKSGLKALIADCYRFHSQRENIIADVYQELIERFGPETSEESLLRFYASERTARLADRIKALGFKHATLGGMTFSASDVEVPDTKDAIVQETYKKVQDIEKMQRRGLITDDERYREVVTAWLDATNQIKVEVQRSLNPFGPVSMMSTSGARGNVEQIRQMAGMRGLTTDPTGRIIELPITANFREGLSVIEYFISTHGGRKGLADTALRTADAGYLTRRLVDVAQDVIVTIEDCGTTEGMWIRVSRDILASVEDRIVGRVTVAPVTNPVTGEVIFDTDSEILEDDGKHIANVLKSLDKEAQAEFGIYVRSVLTCNADYGICRKCYGRNLATGKMVEIGEAVGIIAAQSIGEPGTQLTLRTFHTGGVATDTDITQGLPRVQEIFEARIPKGKAVLAQIAGRVQIVREEEGIRRLRIVSEEVYTDEQMLPKDYRVVVKNGDAVEIGNLLAESNVDGDGRAPLVAGLAGNVYVDDDRLVIQAKDIEEHEEVIAHAARLRVKDGDLVQVGQQMTEGSSDPQEMLQLRGREAVQEYLTNEAQKVYRSQGVGINDKHIEVIVRQMLRRVRIEEPGDTELLPGELVELHELNRINASIVSQGGDPALAVPVLLGITKASLSTDSFLSAASFQETTRVLTEAAVNGKIDYLRGLKENVVIGKLIPAGTGMEQRRKLAEEAALRVAQITSTPADREVPAATPAPAVMSEPKPAPPRSFDEALNAVTNIDSGNGPKDDLFAQAMARLQAEEGRKPTLSELLGTDEDEENV</sequence>
<dbReference type="EC" id="2.7.7.6" evidence="1"/>
<dbReference type="EMBL" id="CP000875">
    <property type="protein sequence ID" value="ABX02894.1"/>
    <property type="molecule type" value="Genomic_DNA"/>
</dbReference>
<dbReference type="SMR" id="A9B6J1"/>
<dbReference type="FunCoup" id="A9B6J1">
    <property type="interactions" value="455"/>
</dbReference>
<dbReference type="STRING" id="316274.Haur_0242"/>
<dbReference type="KEGG" id="hau:Haur_0242"/>
<dbReference type="eggNOG" id="COG0086">
    <property type="taxonomic scope" value="Bacteria"/>
</dbReference>
<dbReference type="HOGENOM" id="CLU_000524_3_1_0"/>
<dbReference type="InParanoid" id="A9B6J1"/>
<dbReference type="Proteomes" id="UP000000787">
    <property type="component" value="Chromosome"/>
</dbReference>
<dbReference type="GO" id="GO:0000428">
    <property type="term" value="C:DNA-directed RNA polymerase complex"/>
    <property type="evidence" value="ECO:0007669"/>
    <property type="project" value="UniProtKB-KW"/>
</dbReference>
<dbReference type="GO" id="GO:0003677">
    <property type="term" value="F:DNA binding"/>
    <property type="evidence" value="ECO:0007669"/>
    <property type="project" value="UniProtKB-UniRule"/>
</dbReference>
<dbReference type="GO" id="GO:0003899">
    <property type="term" value="F:DNA-directed RNA polymerase activity"/>
    <property type="evidence" value="ECO:0007669"/>
    <property type="project" value="UniProtKB-UniRule"/>
</dbReference>
<dbReference type="GO" id="GO:0000287">
    <property type="term" value="F:magnesium ion binding"/>
    <property type="evidence" value="ECO:0007669"/>
    <property type="project" value="UniProtKB-UniRule"/>
</dbReference>
<dbReference type="GO" id="GO:0008270">
    <property type="term" value="F:zinc ion binding"/>
    <property type="evidence" value="ECO:0007669"/>
    <property type="project" value="UniProtKB-UniRule"/>
</dbReference>
<dbReference type="GO" id="GO:0006351">
    <property type="term" value="P:DNA-templated transcription"/>
    <property type="evidence" value="ECO:0007669"/>
    <property type="project" value="UniProtKB-UniRule"/>
</dbReference>
<dbReference type="CDD" id="cd02655">
    <property type="entry name" value="RNAP_beta'_C"/>
    <property type="match status" value="1"/>
</dbReference>
<dbReference type="CDD" id="cd01609">
    <property type="entry name" value="RNAP_beta'_N"/>
    <property type="match status" value="1"/>
</dbReference>
<dbReference type="FunFam" id="1.10.150.390:FF:000002">
    <property type="entry name" value="DNA-directed RNA polymerase subunit beta"/>
    <property type="match status" value="1"/>
</dbReference>
<dbReference type="FunFam" id="1.10.40.90:FF:000001">
    <property type="entry name" value="DNA-directed RNA polymerase subunit beta"/>
    <property type="match status" value="1"/>
</dbReference>
<dbReference type="FunFam" id="4.10.860.120:FF:000001">
    <property type="entry name" value="DNA-directed RNA polymerase subunit beta"/>
    <property type="match status" value="1"/>
</dbReference>
<dbReference type="Gene3D" id="1.10.132.30">
    <property type="match status" value="1"/>
</dbReference>
<dbReference type="Gene3D" id="1.10.150.390">
    <property type="match status" value="1"/>
</dbReference>
<dbReference type="Gene3D" id="1.10.1790.20">
    <property type="match status" value="1"/>
</dbReference>
<dbReference type="Gene3D" id="1.10.40.90">
    <property type="match status" value="1"/>
</dbReference>
<dbReference type="Gene3D" id="2.40.40.20">
    <property type="match status" value="1"/>
</dbReference>
<dbReference type="Gene3D" id="2.40.50.100">
    <property type="match status" value="2"/>
</dbReference>
<dbReference type="Gene3D" id="4.10.860.120">
    <property type="entry name" value="RNA polymerase II, clamp domain"/>
    <property type="match status" value="1"/>
</dbReference>
<dbReference type="Gene3D" id="1.10.274.100">
    <property type="entry name" value="RNA polymerase Rpb1, domain 3"/>
    <property type="match status" value="1"/>
</dbReference>
<dbReference type="HAMAP" id="MF_01322">
    <property type="entry name" value="RNApol_bact_RpoC"/>
    <property type="match status" value="1"/>
</dbReference>
<dbReference type="InterPro" id="IPR045867">
    <property type="entry name" value="DNA-dir_RpoC_beta_prime"/>
</dbReference>
<dbReference type="InterPro" id="IPR012754">
    <property type="entry name" value="DNA-dir_RpoC_beta_prime_bact"/>
</dbReference>
<dbReference type="InterPro" id="IPR000722">
    <property type="entry name" value="RNA_pol_asu"/>
</dbReference>
<dbReference type="InterPro" id="IPR006592">
    <property type="entry name" value="RNA_pol_N"/>
</dbReference>
<dbReference type="InterPro" id="IPR007080">
    <property type="entry name" value="RNA_pol_Rpb1_1"/>
</dbReference>
<dbReference type="InterPro" id="IPR007066">
    <property type="entry name" value="RNA_pol_Rpb1_3"/>
</dbReference>
<dbReference type="InterPro" id="IPR042102">
    <property type="entry name" value="RNA_pol_Rpb1_3_sf"/>
</dbReference>
<dbReference type="InterPro" id="IPR007083">
    <property type="entry name" value="RNA_pol_Rpb1_4"/>
</dbReference>
<dbReference type="InterPro" id="IPR007081">
    <property type="entry name" value="RNA_pol_Rpb1_5"/>
</dbReference>
<dbReference type="InterPro" id="IPR044893">
    <property type="entry name" value="RNA_pol_Rpb1_clamp_domain"/>
</dbReference>
<dbReference type="InterPro" id="IPR038120">
    <property type="entry name" value="Rpb1_funnel_sf"/>
</dbReference>
<dbReference type="NCBIfam" id="TIGR02386">
    <property type="entry name" value="rpoC_TIGR"/>
    <property type="match status" value="1"/>
</dbReference>
<dbReference type="PANTHER" id="PTHR19376">
    <property type="entry name" value="DNA-DIRECTED RNA POLYMERASE"/>
    <property type="match status" value="1"/>
</dbReference>
<dbReference type="PANTHER" id="PTHR19376:SF54">
    <property type="entry name" value="DNA-DIRECTED RNA POLYMERASE SUBUNIT BETA"/>
    <property type="match status" value="1"/>
</dbReference>
<dbReference type="Pfam" id="PF04997">
    <property type="entry name" value="RNA_pol_Rpb1_1"/>
    <property type="match status" value="1"/>
</dbReference>
<dbReference type="Pfam" id="PF00623">
    <property type="entry name" value="RNA_pol_Rpb1_2"/>
    <property type="match status" value="2"/>
</dbReference>
<dbReference type="Pfam" id="PF04983">
    <property type="entry name" value="RNA_pol_Rpb1_3"/>
    <property type="match status" value="1"/>
</dbReference>
<dbReference type="Pfam" id="PF05000">
    <property type="entry name" value="RNA_pol_Rpb1_4"/>
    <property type="match status" value="1"/>
</dbReference>
<dbReference type="Pfam" id="PF04998">
    <property type="entry name" value="RNA_pol_Rpb1_5"/>
    <property type="match status" value="1"/>
</dbReference>
<dbReference type="SMART" id="SM00663">
    <property type="entry name" value="RPOLA_N"/>
    <property type="match status" value="1"/>
</dbReference>
<dbReference type="SUPFAM" id="SSF64484">
    <property type="entry name" value="beta and beta-prime subunits of DNA dependent RNA-polymerase"/>
    <property type="match status" value="1"/>
</dbReference>
<proteinExistence type="inferred from homology"/>
<reference key="1">
    <citation type="journal article" date="2011" name="Stand. Genomic Sci.">
        <title>Complete genome sequence of the filamentous gliding predatory bacterium Herpetosiphon aurantiacus type strain (114-95(T)).</title>
        <authorList>
            <person name="Kiss H."/>
            <person name="Nett M."/>
            <person name="Domin N."/>
            <person name="Martin K."/>
            <person name="Maresca J.A."/>
            <person name="Copeland A."/>
            <person name="Lapidus A."/>
            <person name="Lucas S."/>
            <person name="Berry K.W."/>
            <person name="Glavina Del Rio T."/>
            <person name="Dalin E."/>
            <person name="Tice H."/>
            <person name="Pitluck S."/>
            <person name="Richardson P."/>
            <person name="Bruce D."/>
            <person name="Goodwin L."/>
            <person name="Han C."/>
            <person name="Detter J.C."/>
            <person name="Schmutz J."/>
            <person name="Brettin T."/>
            <person name="Land M."/>
            <person name="Hauser L."/>
            <person name="Kyrpides N.C."/>
            <person name="Ivanova N."/>
            <person name="Goeker M."/>
            <person name="Woyke T."/>
            <person name="Klenk H.P."/>
            <person name="Bryant D.A."/>
        </authorList>
    </citation>
    <scope>NUCLEOTIDE SEQUENCE [LARGE SCALE GENOMIC DNA]</scope>
    <source>
        <strain>ATCC 23779 / DSM 785 / 114-95</strain>
    </source>
</reference>
<keyword id="KW-0240">DNA-directed RNA polymerase</keyword>
<keyword id="KW-0460">Magnesium</keyword>
<keyword id="KW-0479">Metal-binding</keyword>
<keyword id="KW-0548">Nucleotidyltransferase</keyword>
<keyword id="KW-0804">Transcription</keyword>
<keyword id="KW-0808">Transferase</keyword>
<keyword id="KW-0862">Zinc</keyword>
<comment type="function">
    <text evidence="1">DNA-dependent RNA polymerase catalyzes the transcription of DNA into RNA using the four ribonucleoside triphosphates as substrates.</text>
</comment>
<comment type="catalytic activity">
    <reaction evidence="1">
        <text>RNA(n) + a ribonucleoside 5'-triphosphate = RNA(n+1) + diphosphate</text>
        <dbReference type="Rhea" id="RHEA:21248"/>
        <dbReference type="Rhea" id="RHEA-COMP:14527"/>
        <dbReference type="Rhea" id="RHEA-COMP:17342"/>
        <dbReference type="ChEBI" id="CHEBI:33019"/>
        <dbReference type="ChEBI" id="CHEBI:61557"/>
        <dbReference type="ChEBI" id="CHEBI:140395"/>
        <dbReference type="EC" id="2.7.7.6"/>
    </reaction>
</comment>
<comment type="cofactor">
    <cofactor evidence="1">
        <name>Mg(2+)</name>
        <dbReference type="ChEBI" id="CHEBI:18420"/>
    </cofactor>
    <text evidence="1">Binds 1 Mg(2+) ion per subunit.</text>
</comment>
<comment type="cofactor">
    <cofactor evidence="1">
        <name>Zn(2+)</name>
        <dbReference type="ChEBI" id="CHEBI:29105"/>
    </cofactor>
    <text evidence="1">Binds 2 Zn(2+) ions per subunit.</text>
</comment>
<comment type="subunit">
    <text evidence="1">The RNAP catalytic core consists of 2 alpha, 1 beta, 1 beta' and 1 omega subunit. When a sigma factor is associated with the core the holoenzyme is formed, which can initiate transcription.</text>
</comment>
<comment type="similarity">
    <text evidence="1">Belongs to the RNA polymerase beta' chain family.</text>
</comment>
<protein>
    <recommendedName>
        <fullName evidence="1">DNA-directed RNA polymerase subunit beta'</fullName>
        <shortName evidence="1">RNAP subunit beta'</shortName>
        <ecNumber evidence="1">2.7.7.6</ecNumber>
    </recommendedName>
    <alternativeName>
        <fullName evidence="1">RNA polymerase subunit beta'</fullName>
    </alternativeName>
    <alternativeName>
        <fullName evidence="1">Transcriptase subunit beta'</fullName>
    </alternativeName>
</protein>
<accession>A9B6J1</accession>
<organism>
    <name type="scientific">Herpetosiphon aurantiacus (strain ATCC 23779 / DSM 785 / 114-95)</name>
    <dbReference type="NCBI Taxonomy" id="316274"/>
    <lineage>
        <taxon>Bacteria</taxon>
        <taxon>Bacillati</taxon>
        <taxon>Chloroflexota</taxon>
        <taxon>Chloroflexia</taxon>
        <taxon>Herpetosiphonales</taxon>
        <taxon>Herpetosiphonaceae</taxon>
        <taxon>Herpetosiphon</taxon>
    </lineage>
</organism>
<evidence type="ECO:0000255" key="1">
    <source>
        <dbReference type="HAMAP-Rule" id="MF_01322"/>
    </source>
</evidence>
<evidence type="ECO:0000256" key="2">
    <source>
        <dbReference type="SAM" id="MobiDB-lite"/>
    </source>
</evidence>
<gene>
    <name evidence="1" type="primary">rpoC</name>
    <name type="ordered locus">Haur_0242</name>
</gene>
<name>RPOC_HERA2</name>
<feature type="chain" id="PRO_1000141772" description="DNA-directed RNA polymerase subunit beta'">
    <location>
        <begin position="1"/>
        <end position="1543"/>
    </location>
</feature>
<feature type="region of interest" description="Disordered" evidence="2">
    <location>
        <begin position="1466"/>
        <end position="1490"/>
    </location>
</feature>
<feature type="region of interest" description="Disordered" evidence="2">
    <location>
        <begin position="1522"/>
        <end position="1543"/>
    </location>
</feature>
<feature type="binding site" evidence="1">
    <location>
        <position position="60"/>
    </location>
    <ligand>
        <name>Zn(2+)</name>
        <dbReference type="ChEBI" id="CHEBI:29105"/>
        <label>1</label>
    </ligand>
</feature>
<feature type="binding site" evidence="1">
    <location>
        <position position="62"/>
    </location>
    <ligand>
        <name>Zn(2+)</name>
        <dbReference type="ChEBI" id="CHEBI:29105"/>
        <label>1</label>
    </ligand>
</feature>
<feature type="binding site" evidence="1">
    <location>
        <position position="75"/>
    </location>
    <ligand>
        <name>Zn(2+)</name>
        <dbReference type="ChEBI" id="CHEBI:29105"/>
        <label>1</label>
    </ligand>
</feature>
<feature type="binding site" evidence="1">
    <location>
        <position position="78"/>
    </location>
    <ligand>
        <name>Zn(2+)</name>
        <dbReference type="ChEBI" id="CHEBI:29105"/>
        <label>1</label>
    </ligand>
</feature>
<feature type="binding site" evidence="1">
    <location>
        <position position="627"/>
    </location>
    <ligand>
        <name>Mg(2+)</name>
        <dbReference type="ChEBI" id="CHEBI:18420"/>
    </ligand>
</feature>
<feature type="binding site" evidence="1">
    <location>
        <position position="629"/>
    </location>
    <ligand>
        <name>Mg(2+)</name>
        <dbReference type="ChEBI" id="CHEBI:18420"/>
    </ligand>
</feature>
<feature type="binding site" evidence="1">
    <location>
        <position position="631"/>
    </location>
    <ligand>
        <name>Mg(2+)</name>
        <dbReference type="ChEBI" id="CHEBI:18420"/>
    </ligand>
</feature>
<feature type="binding site" evidence="1">
    <location>
        <position position="1017"/>
    </location>
    <ligand>
        <name>Zn(2+)</name>
        <dbReference type="ChEBI" id="CHEBI:29105"/>
        <label>2</label>
    </ligand>
</feature>
<feature type="binding site" evidence="1">
    <location>
        <position position="1097"/>
    </location>
    <ligand>
        <name>Zn(2+)</name>
        <dbReference type="ChEBI" id="CHEBI:29105"/>
        <label>2</label>
    </ligand>
</feature>
<feature type="binding site" evidence="1">
    <location>
        <position position="1104"/>
    </location>
    <ligand>
        <name>Zn(2+)</name>
        <dbReference type="ChEBI" id="CHEBI:29105"/>
        <label>2</label>
    </ligand>
</feature>
<feature type="binding site" evidence="1">
    <location>
        <position position="1107"/>
    </location>
    <ligand>
        <name>Zn(2+)</name>
        <dbReference type="ChEBI" id="CHEBI:29105"/>
        <label>2</label>
    </ligand>
</feature>